<sequence length="607" mass="65382">MASTHAAGSPAPSSSINSPILHPVNASVSNASLGEGSIRFSPAPPSTFSNQGDGVRSKRNKRDSRKKREAKGLDQESAPPKKKSVAVLNTAIPSSDLGILRPIAVGEPRHSDLFPPQPRQLNFAVRKMSGVIGQSWDFYEVVDKLTNKNGFRYSYAIADTDFPHIKYRQTDVPPYHARFSFEDSPAAILFSKDALAVTTNEPWHTARANVCAREGTYYYEARIISGIMSSSEATTSNGSNALPSRGHVRLGFARREADLDVNVGVDCYGYGIRDVNGEVVNRMRCEYFFPKGESIREGDVIGMLITLPPLSLHRKIVEGTYDPACDNFKPGPASATNIIRDRIPFHYKNDFCWQQSNVFPTKQLRDYAFNLKETPAFGPPSPLNAEDPSLRTLPGSSITIYKNGIKMGTPFKELYAFLPPASRLANGTNNLGLGERENADDGMIGYYPAVSCYGGGAVECRFQGPWWFSPPSATENGEPVKGIGERFDEQIVEDVLADIVDEVEAMLVWGSVDGNVVNNAEMDAPGVGAVGGTDVLKGGVGAAYDPATTLSTAPAESNGSGTASIKLADEDACHTGFEDTMSLGVANTPITDVPVPPEPEDTPMTGG</sequence>
<name>CCLA_EMENI</name>
<comment type="function">
    <text evidence="1 4 5">Component of the COMPASS (Set1C) complex that specifically mono-, di- and trimethylates histone H3 to form H3K4me1/2/3, which subsequently plays a role in telomere length maintenance and transcription elongation regulation (By similarity). Controls the production of several secondary metabolites, including monodictyphenone, emodin and emodin derivatives, as well as two anti-osteoporosis polyketides, F9775A and F9775B (PubMed:19448638, PubMed:31456754).</text>
</comment>
<comment type="subunit">
    <text evidence="1">Component of the COMPASS complex.</text>
</comment>
<comment type="subcellular location">
    <subcellularLocation>
        <location evidence="7">Nucleus</location>
    </subcellularLocation>
    <subcellularLocation>
        <location evidence="7">Chromosome</location>
        <location evidence="7">Telomere</location>
    </subcellularLocation>
</comment>
<comment type="disruption phenotype">
    <text evidence="4 5">Impairs tri- and dimethylation of H3K4 (PubMed:19448638, PubMed:31456754). Leads to increased production of several secondary metabolites, including monodictyphenone, emodin and emodin derivatives, as well as two anti-osteoporosis polyketides, F9775A and F9775B (PubMed:19448638, PubMed:31456754).</text>
</comment>
<comment type="similarity">
    <text evidence="7">Belongs to the cclA family.</text>
</comment>
<feature type="chain" id="PRO_0000458878" description="COMPASS component cclA">
    <location>
        <begin position="1"/>
        <end position="607"/>
    </location>
</feature>
<feature type="domain" description="B30.2/SPRY" evidence="2">
    <location>
        <begin position="157"/>
        <end position="376"/>
    </location>
</feature>
<feature type="region of interest" description="Disordered" evidence="3">
    <location>
        <begin position="1"/>
        <end position="22"/>
    </location>
</feature>
<feature type="region of interest" description="Disordered" evidence="3">
    <location>
        <begin position="34"/>
        <end position="86"/>
    </location>
</feature>
<feature type="region of interest" description="Disordered" evidence="3">
    <location>
        <begin position="587"/>
        <end position="607"/>
    </location>
</feature>
<feature type="compositionally biased region" description="Low complexity" evidence="3">
    <location>
        <begin position="1"/>
        <end position="19"/>
    </location>
</feature>
<feature type="compositionally biased region" description="Basic residues" evidence="3">
    <location>
        <begin position="57"/>
        <end position="69"/>
    </location>
</feature>
<evidence type="ECO:0000250" key="1">
    <source>
        <dbReference type="UniProtKB" id="P43132"/>
    </source>
</evidence>
<evidence type="ECO:0000255" key="2">
    <source>
        <dbReference type="PROSITE-ProRule" id="PRU00548"/>
    </source>
</evidence>
<evidence type="ECO:0000256" key="3">
    <source>
        <dbReference type="SAM" id="MobiDB-lite"/>
    </source>
</evidence>
<evidence type="ECO:0000269" key="4">
    <source>
    </source>
</evidence>
<evidence type="ECO:0000269" key="5">
    <source>
    </source>
</evidence>
<evidence type="ECO:0000303" key="6">
    <source>
    </source>
</evidence>
<evidence type="ECO:0000305" key="7"/>
<accession>Q5AQN1</accession>
<accession>A0A1U8QP51</accession>
<accession>C8VRK2</accession>
<protein>
    <recommendedName>
        <fullName evidence="6">COMPASS component cclA</fullName>
    </recommendedName>
</protein>
<keyword id="KW-0158">Chromosome</keyword>
<keyword id="KW-0539">Nucleus</keyword>
<keyword id="KW-1185">Reference proteome</keyword>
<keyword id="KW-0779">Telomere</keyword>
<reference key="1">
    <citation type="journal article" date="2005" name="Nature">
        <title>Sequencing of Aspergillus nidulans and comparative analysis with A. fumigatus and A. oryzae.</title>
        <authorList>
            <person name="Galagan J.E."/>
            <person name="Calvo S.E."/>
            <person name="Cuomo C."/>
            <person name="Ma L.-J."/>
            <person name="Wortman J.R."/>
            <person name="Batzoglou S."/>
            <person name="Lee S.-I."/>
            <person name="Bastuerkmen M."/>
            <person name="Spevak C.C."/>
            <person name="Clutterbuck J."/>
            <person name="Kapitonov V."/>
            <person name="Jurka J."/>
            <person name="Scazzocchio C."/>
            <person name="Farman M.L."/>
            <person name="Butler J."/>
            <person name="Purcell S."/>
            <person name="Harris S."/>
            <person name="Braus G.H."/>
            <person name="Draht O."/>
            <person name="Busch S."/>
            <person name="D'Enfert C."/>
            <person name="Bouchier C."/>
            <person name="Goldman G.H."/>
            <person name="Bell-Pedersen D."/>
            <person name="Griffiths-Jones S."/>
            <person name="Doonan J.H."/>
            <person name="Yu J."/>
            <person name="Vienken K."/>
            <person name="Pain A."/>
            <person name="Freitag M."/>
            <person name="Selker E.U."/>
            <person name="Archer D.B."/>
            <person name="Penalva M.A."/>
            <person name="Oakley B.R."/>
            <person name="Momany M."/>
            <person name="Tanaka T."/>
            <person name="Kumagai T."/>
            <person name="Asai K."/>
            <person name="Machida M."/>
            <person name="Nierman W.C."/>
            <person name="Denning D.W."/>
            <person name="Caddick M.X."/>
            <person name="Hynes M."/>
            <person name="Paoletti M."/>
            <person name="Fischer R."/>
            <person name="Miller B.L."/>
            <person name="Dyer P.S."/>
            <person name="Sachs M.S."/>
            <person name="Osmani S.A."/>
            <person name="Birren B.W."/>
        </authorList>
    </citation>
    <scope>NUCLEOTIDE SEQUENCE [LARGE SCALE GENOMIC DNA]</scope>
    <source>
        <strain>FGSC A4 / ATCC 38163 / CBS 112.46 / NRRL 194 / M139</strain>
    </source>
</reference>
<reference key="2">
    <citation type="journal article" date="2009" name="Fungal Genet. Biol.">
        <title>The 2008 update of the Aspergillus nidulans genome annotation: a community effort.</title>
        <authorList>
            <person name="Wortman J.R."/>
            <person name="Gilsenan J.M."/>
            <person name="Joardar V."/>
            <person name="Deegan J."/>
            <person name="Clutterbuck J."/>
            <person name="Andersen M.R."/>
            <person name="Archer D."/>
            <person name="Bencina M."/>
            <person name="Braus G."/>
            <person name="Coutinho P."/>
            <person name="von Dohren H."/>
            <person name="Doonan J."/>
            <person name="Driessen A.J."/>
            <person name="Durek P."/>
            <person name="Espeso E."/>
            <person name="Fekete E."/>
            <person name="Flipphi M."/>
            <person name="Estrada C.G."/>
            <person name="Geysens S."/>
            <person name="Goldman G."/>
            <person name="de Groot P.W."/>
            <person name="Hansen K."/>
            <person name="Harris S.D."/>
            <person name="Heinekamp T."/>
            <person name="Helmstaedt K."/>
            <person name="Henrissat B."/>
            <person name="Hofmann G."/>
            <person name="Homan T."/>
            <person name="Horio T."/>
            <person name="Horiuchi H."/>
            <person name="James S."/>
            <person name="Jones M."/>
            <person name="Karaffa L."/>
            <person name="Karanyi Z."/>
            <person name="Kato M."/>
            <person name="Keller N."/>
            <person name="Kelly D.E."/>
            <person name="Kiel J.A."/>
            <person name="Kim J.M."/>
            <person name="van der Klei I.J."/>
            <person name="Klis F.M."/>
            <person name="Kovalchuk A."/>
            <person name="Krasevec N."/>
            <person name="Kubicek C.P."/>
            <person name="Liu B."/>
            <person name="Maccabe A."/>
            <person name="Meyer V."/>
            <person name="Mirabito P."/>
            <person name="Miskei M."/>
            <person name="Mos M."/>
            <person name="Mullins J."/>
            <person name="Nelson D.R."/>
            <person name="Nielsen J."/>
            <person name="Oakley B.R."/>
            <person name="Osmani S.A."/>
            <person name="Pakula T."/>
            <person name="Paszewski A."/>
            <person name="Paulsen I."/>
            <person name="Pilsyk S."/>
            <person name="Pocsi I."/>
            <person name="Punt P.J."/>
            <person name="Ram A.F."/>
            <person name="Ren Q."/>
            <person name="Robellet X."/>
            <person name="Robson G."/>
            <person name="Seiboth B."/>
            <person name="van Solingen P."/>
            <person name="Specht T."/>
            <person name="Sun J."/>
            <person name="Taheri-Talesh N."/>
            <person name="Takeshita N."/>
            <person name="Ussery D."/>
            <person name="vanKuyk P.A."/>
            <person name="Visser H."/>
            <person name="van de Vondervoort P.J."/>
            <person name="de Vries R.P."/>
            <person name="Walton J."/>
            <person name="Xiang X."/>
            <person name="Xiong Y."/>
            <person name="Zeng A.P."/>
            <person name="Brandt B.W."/>
            <person name="Cornell M.J."/>
            <person name="van den Hondel C.A."/>
            <person name="Visser J."/>
            <person name="Oliver S.G."/>
            <person name="Turner G."/>
        </authorList>
    </citation>
    <scope>GENOME REANNOTATION</scope>
    <source>
        <strain>FGSC A4 / ATCC 38163 / CBS 112.46 / NRRL 194 / M139</strain>
    </source>
</reference>
<reference key="3">
    <citation type="journal article" date="2009" name="Nat. Chem. Biol.">
        <title>Chromatin-level regulation of biosynthetic gene clusters.</title>
        <authorList>
            <person name="Bok J.W."/>
            <person name="Chiang Y.M."/>
            <person name="Szewczyk E."/>
            <person name="Reyes-Dominguez Y."/>
            <person name="Davidson A.D."/>
            <person name="Sanchez J.F."/>
            <person name="Lo H.C."/>
            <person name="Watanabe K."/>
            <person name="Strauss J."/>
            <person name="Oakley B.R."/>
            <person name="Wang C.C."/>
            <person name="Keller N.P."/>
        </authorList>
    </citation>
    <scope>FUNCTION</scope>
    <scope>DISRUPTION PHENOTYPE</scope>
</reference>
<reference key="4">
    <citation type="journal article" date="2019" name="Front. Microbiol.">
        <title>Evidence of a Demethylase-Independent Role for the H3K4-Specific Histone Demethylases in Aspergillus nidulans and Fusarium graminearum Secondary Metabolism.</title>
        <authorList>
            <person name="Bachleitner S."/>
            <person name="Soerensen J.L."/>
            <person name="Gacek-Matthews A."/>
            <person name="Sulyok M."/>
            <person name="Studt L."/>
            <person name="Strauss J."/>
        </authorList>
    </citation>
    <scope>FUNCTION</scope>
    <scope>DISRUPTION PHENOTYPE</scope>
</reference>
<proteinExistence type="inferred from homology"/>
<dbReference type="EMBL" id="AACD01000172">
    <property type="protein sequence ID" value="EAA66466.1"/>
    <property type="molecule type" value="Genomic_DNA"/>
</dbReference>
<dbReference type="EMBL" id="BN001308">
    <property type="protein sequence ID" value="CBF87538.1"/>
    <property type="molecule type" value="Genomic_DNA"/>
</dbReference>
<dbReference type="RefSeq" id="XP_682668.1">
    <property type="nucleotide sequence ID" value="XM_677576.1"/>
</dbReference>
<dbReference type="SMR" id="Q5AQN1"/>
<dbReference type="FunCoup" id="Q5AQN1">
    <property type="interactions" value="91"/>
</dbReference>
<dbReference type="STRING" id="227321.Q5AQN1"/>
<dbReference type="EnsemblFungi" id="CBF87538">
    <property type="protein sequence ID" value="CBF87538"/>
    <property type="gene ID" value="ANIA_09399"/>
</dbReference>
<dbReference type="GeneID" id="2867789"/>
<dbReference type="KEGG" id="ani:ANIA_09399"/>
<dbReference type="VEuPathDB" id="FungiDB:AN9399"/>
<dbReference type="eggNOG" id="KOG2626">
    <property type="taxonomic scope" value="Eukaryota"/>
</dbReference>
<dbReference type="HOGENOM" id="CLU_014420_3_1_1"/>
<dbReference type="InParanoid" id="Q5AQN1"/>
<dbReference type="OMA" id="GFRYTYA"/>
<dbReference type="OrthoDB" id="10266026at2759"/>
<dbReference type="Proteomes" id="UP000000560">
    <property type="component" value="Chromosome VIII"/>
</dbReference>
<dbReference type="GO" id="GO:0000781">
    <property type="term" value="C:chromosome, telomeric region"/>
    <property type="evidence" value="ECO:0007669"/>
    <property type="project" value="UniProtKB-SubCell"/>
</dbReference>
<dbReference type="GO" id="GO:0048188">
    <property type="term" value="C:Set1C/COMPASS complex"/>
    <property type="evidence" value="ECO:0000318"/>
    <property type="project" value="GO_Central"/>
</dbReference>
<dbReference type="GO" id="GO:0000976">
    <property type="term" value="F:transcription cis-regulatory region binding"/>
    <property type="evidence" value="ECO:0000318"/>
    <property type="project" value="GO_Central"/>
</dbReference>
<dbReference type="GO" id="GO:0040029">
    <property type="term" value="P:epigenetic regulation of gene expression"/>
    <property type="evidence" value="ECO:0000315"/>
    <property type="project" value="GO_Central"/>
</dbReference>
<dbReference type="GO" id="GO:1900376">
    <property type="term" value="P:regulation of secondary metabolite biosynthetic process"/>
    <property type="evidence" value="ECO:0000315"/>
    <property type="project" value="AspGD"/>
</dbReference>
<dbReference type="CDD" id="cd12872">
    <property type="entry name" value="SPRY_Ash2"/>
    <property type="match status" value="1"/>
</dbReference>
<dbReference type="Gene3D" id="2.60.120.920">
    <property type="match status" value="1"/>
</dbReference>
<dbReference type="InterPro" id="IPR037353">
    <property type="entry name" value="ASH2"/>
</dbReference>
<dbReference type="InterPro" id="IPR001870">
    <property type="entry name" value="B30.2/SPRY"/>
</dbReference>
<dbReference type="InterPro" id="IPR043136">
    <property type="entry name" value="B30.2/SPRY_sf"/>
</dbReference>
<dbReference type="InterPro" id="IPR013320">
    <property type="entry name" value="ConA-like_dom_sf"/>
</dbReference>
<dbReference type="InterPro" id="IPR003877">
    <property type="entry name" value="SPRY_dom"/>
</dbReference>
<dbReference type="PANTHER" id="PTHR10598">
    <property type="entry name" value="SET1/ASH2 HISTONE METHYLTRANSFERASE COMPLEX SUBUNIT ASH2"/>
    <property type="match status" value="1"/>
</dbReference>
<dbReference type="PANTHER" id="PTHR10598:SF0">
    <property type="entry name" value="SET1_ASH2 HISTONE METHYLTRANSFERASE COMPLEX SUBUNIT ASH2"/>
    <property type="match status" value="1"/>
</dbReference>
<dbReference type="SMART" id="SM00449">
    <property type="entry name" value="SPRY"/>
    <property type="match status" value="1"/>
</dbReference>
<dbReference type="SUPFAM" id="SSF49899">
    <property type="entry name" value="Concanavalin A-like lectins/glucanases"/>
    <property type="match status" value="1"/>
</dbReference>
<dbReference type="PROSITE" id="PS50188">
    <property type="entry name" value="B302_SPRY"/>
    <property type="match status" value="1"/>
</dbReference>
<organism>
    <name type="scientific">Emericella nidulans (strain FGSC A4 / ATCC 38163 / CBS 112.46 / NRRL 194 / M139)</name>
    <name type="common">Aspergillus nidulans</name>
    <dbReference type="NCBI Taxonomy" id="227321"/>
    <lineage>
        <taxon>Eukaryota</taxon>
        <taxon>Fungi</taxon>
        <taxon>Dikarya</taxon>
        <taxon>Ascomycota</taxon>
        <taxon>Pezizomycotina</taxon>
        <taxon>Eurotiomycetes</taxon>
        <taxon>Eurotiomycetidae</taxon>
        <taxon>Eurotiales</taxon>
        <taxon>Aspergillaceae</taxon>
        <taxon>Aspergillus</taxon>
        <taxon>Aspergillus subgen. Nidulantes</taxon>
    </lineage>
</organism>
<gene>
    <name evidence="6" type="primary">cclA</name>
    <name type="ORF">AN9399</name>
    <name type="ORF">ANIA_09399</name>
</gene>